<organism>
    <name type="scientific">Claviceps paspali</name>
    <name type="common">Rye ergot fungus</name>
    <dbReference type="NCBI Taxonomy" id="40601"/>
    <lineage>
        <taxon>Eukaryota</taxon>
        <taxon>Fungi</taxon>
        <taxon>Dikarya</taxon>
        <taxon>Ascomycota</taxon>
        <taxon>Pezizomycotina</taxon>
        <taxon>Sordariomycetes</taxon>
        <taxon>Hypocreomycetidae</taxon>
        <taxon>Hypocreales</taxon>
        <taxon>Clavicipitaceae</taxon>
        <taxon>Claviceps</taxon>
    </lineage>
</organism>
<accession>J7FIP9</accession>
<feature type="chain" id="PRO_0000451438" description="Indole-diterpene biosynthesis cluster protein S">
    <location>
        <begin position="1"/>
        <end position="259"/>
    </location>
</feature>
<feature type="transmembrane region" description="Helical" evidence="1">
    <location>
        <begin position="5"/>
        <end position="25"/>
    </location>
</feature>
<feature type="transmembrane region" description="Helical" evidence="1">
    <location>
        <begin position="64"/>
        <end position="84"/>
    </location>
</feature>
<feature type="transmembrane region" description="Helical" evidence="1">
    <location>
        <begin position="87"/>
        <end position="107"/>
    </location>
</feature>
<feature type="transmembrane region" description="Helical" evidence="1">
    <location>
        <begin position="134"/>
        <end position="154"/>
    </location>
</feature>
<feature type="transmembrane region" description="Helical" evidence="1">
    <location>
        <begin position="221"/>
        <end position="241"/>
    </location>
</feature>
<comment type="function">
    <text evidence="2 3 4 7">Part of the gene cluster that mediates the biosynthesis of paspalitrems, indole-diterpene (IDT) mycotoxins that are potent tremorgens in mammals (PubMed:23468653, PubMed:29457197, PubMed:32077051). The geranylgeranyl diphosphate (GGPP) synthase idtG is proposed to catalyze the first step in IDT biosynthesis via catalysis of a series of iterative condensations of isopentenyl diphosphate (IPP) with dimethylallyl diphosphate (DMAPP), geranyl diphosphate (GPP), and farnesyl diphosphate (FPP), to form GGPP (Probable). Condensation of indole-3-glycerol phosphate with GGPP by the prenyltransferase idtC then forms 3-geranylgeranylindole (3-GGI) (Probable). Epoxidation of the two terminal alkenes of the geranylgeranyl moiety by the FAD-dependent monooxygenase idtM, and cyclization by the terpene cyclase idtB then leads to the production of paspaline (Probable). The cytochrome P450 monooxygenase idtP then catalyzes oxidative elimination of the pendant methyl group at C-12 of paspaline and generates the C-10 ketone to yield 13-desoxypaxilline (PubMed:32077051). The cytochrome P450 monooxygenase idtQ may catalyze the C-13 oxidation of 13-desoxypaxilline to afford paxilline (Probable). Considering that both paspalicine and paxilline were detected in C.paspali, idtQ also catalyzes the formation of paspalinine from 13-desoxypaxilline via paspalicine as an intermediate (Probable). Finally, the alpha-prenyltransferase idtF prenylates paspalinine at the C-20 or the C-21 positions to yield paspalitrems A and C, respectively (PubMed:32077051). The hydroxylation of paspalitrem A at C-32 by a still unknown oxidase affords paspalitrem B (Probable).</text>
</comment>
<comment type="subcellular location">
    <subcellularLocation>
        <location evidence="1">Membrane</location>
        <topology evidence="1">Multi-pass membrane protein</topology>
    </subcellularLocation>
</comment>
<comment type="similarity">
    <text evidence="6">Belongs to the ltmS family.</text>
</comment>
<keyword id="KW-0472">Membrane</keyword>
<keyword id="KW-0812">Transmembrane</keyword>
<keyword id="KW-1133">Transmembrane helix</keyword>
<reference key="1">
    <citation type="journal article" date="2013" name="PLoS Genet.">
        <title>Plant-symbiotic fungi as chemical engineers: Multi-genome analysis of the Clavicipitaceae reveals dynamics of alkaloid loci.</title>
        <authorList>
            <person name="Schardl C.L."/>
            <person name="Young C.A."/>
            <person name="Hesse U."/>
            <person name="Amyotte S.G."/>
            <person name="Andreeva K."/>
            <person name="Calie P.J."/>
            <person name="Fleetwood D.J."/>
            <person name="Haws D.C."/>
            <person name="Moore N."/>
            <person name="Oeser B."/>
            <person name="Panaccione D.G."/>
            <person name="Schweri K.K."/>
            <person name="Voisey C.R."/>
            <person name="Farman M.L."/>
            <person name="Jaromczyk J.W."/>
            <person name="Roe B.A."/>
            <person name="O'Sullivan D.M."/>
            <person name="Scott B."/>
            <person name="Tudzynski P."/>
            <person name="An Z."/>
            <person name="Arnaoudova E.G."/>
            <person name="Bullock C.T."/>
            <person name="Charlton N.D."/>
            <person name="Chen L."/>
            <person name="Cox M."/>
            <person name="Dinkins R.D."/>
            <person name="Florea S."/>
            <person name="Glenn A.E."/>
            <person name="Gordon A."/>
            <person name="Gueldener U."/>
            <person name="Harris D.R."/>
            <person name="Hollin W."/>
            <person name="Jaromczyk J."/>
            <person name="Johnson R.D."/>
            <person name="Khan A.K."/>
            <person name="Leistner E."/>
            <person name="Leuchtmann A."/>
            <person name="Li C."/>
            <person name="Liu J."/>
            <person name="Liu J."/>
            <person name="Liu M."/>
            <person name="Mace W."/>
            <person name="Machado C."/>
            <person name="Nagabhyru P."/>
            <person name="Pan J."/>
            <person name="Schmid J."/>
            <person name="Sugawara K."/>
            <person name="Steiner U."/>
            <person name="Takach J.E."/>
            <person name="Tanaka E."/>
            <person name="Webb J.S."/>
            <person name="Wilson E.V."/>
            <person name="Wiseman J.L."/>
            <person name="Yoshida R."/>
            <person name="Zeng Z."/>
        </authorList>
    </citation>
    <scope>NUCLEOTIDE SEQUENCE [GENOMIC DNA]</scope>
    <scope>IDENTIFICATION</scope>
    <scope>FUNCTION</scope>
    <source>
        <strain>RRC-1481</strain>
    </source>
</reference>
<reference key="2">
    <citation type="journal article" date="2018" name="Appl. Microbiol. Biotechnol.">
        <title>Inactivation of the indole-diterpene biosynthetic gene cluster of Claviceps paspali by Agrobacterium-mediated gene replacement.</title>
        <authorList>
            <person name="Kozak L."/>
            <person name="Szilagyi Z."/>
            <person name="Vago B."/>
            <person name="Kakuk A."/>
            <person name="Toth L."/>
            <person name="Molnar I."/>
            <person name="Pocsi I."/>
        </authorList>
    </citation>
    <scope>FUNCTION</scope>
    <scope>PATHWAY</scope>
</reference>
<reference key="3">
    <citation type="journal article" date="2020" name="Folia Microbiol. (Praha)">
        <title>Functional characterization of the idtF and idtP genes in the Claviceps paspali indole diterpene biosynthetic gene cluster.</title>
        <authorList>
            <person name="Kozak L."/>
            <person name="Szilagyi Z."/>
            <person name="Toth L."/>
            <person name="Pocsi I."/>
            <person name="Molnar I."/>
        </authorList>
    </citation>
    <scope>FUNCTION</scope>
</reference>
<name>IDTS_CLAPA</name>
<proteinExistence type="inferred from homology"/>
<dbReference type="EMBL" id="JN613321">
    <property type="protein sequence ID" value="AFO85423.1"/>
    <property type="molecule type" value="Genomic_DNA"/>
</dbReference>
<dbReference type="GO" id="GO:0016020">
    <property type="term" value="C:membrane"/>
    <property type="evidence" value="ECO:0007669"/>
    <property type="project" value="UniProtKB-SubCell"/>
</dbReference>
<gene>
    <name evidence="5" type="primary">idtS</name>
</gene>
<protein>
    <recommendedName>
        <fullName evidence="5">Indole-diterpene biosynthesis cluster protein S</fullName>
    </recommendedName>
</protein>
<evidence type="ECO:0000255" key="1"/>
<evidence type="ECO:0000269" key="2">
    <source>
    </source>
</evidence>
<evidence type="ECO:0000269" key="3">
    <source>
    </source>
</evidence>
<evidence type="ECO:0000269" key="4">
    <source>
    </source>
</evidence>
<evidence type="ECO:0000303" key="5">
    <source>
    </source>
</evidence>
<evidence type="ECO:0000305" key="6"/>
<evidence type="ECO:0000305" key="7">
    <source>
    </source>
</evidence>
<sequence length="259" mass="28679">MSRTEASGWGFSLLQILLVLAGMVWKAREGFPIVDFLDTSGDTCSWLNPCIVPPALSCWNNWPWFALHLFLYTTQLVGLSAIILPPVYLIRMLGLSTALPLISLWVLHRRRRTGKGWATTFPPRHGEEAFLWRVLWFTGLAHVASFLVATAASFLGREDMAPWHLTNTLLGTPDCSYLPCSQIAERQARLRQINEMTGTSSGFFLAVALFSQHLEMNGARLGAGLLARLFFVSLIAGPAAGAADALLLRSAFMRTRRST</sequence>